<proteinExistence type="evidence at protein level"/>
<keyword id="KW-0045">Antibiotic biosynthesis</keyword>
<keyword id="KW-0378">Hydrolase</keyword>
<accession>Q9ZGI1</accession>
<sequence>MTDRPLNVDSGLWIRRFHPAPNSAVRLVCLPHAGGSASYFFRFSEELHPSVEALSVQYPGRQDRRAEPCLESVEELAEHVVAATEPWWQEGRLAFFGHSLGASVAFETARILEQRHGVRPEGLYVSGRRAPSLAPDRLVHQLDDRAFLAEIRRLSGTDERFLQDDELLRLVLPALRSDYKAAETYLHRPSAKLTCPVMALAGDRDPKAPLNEVAEWRRHTSGPFCLRAYSGGHFYLNDQWHEICNDISDHLLVTRGAPDARVVQPPTSLIEGAAKRWQNPR</sequence>
<organism>
    <name type="scientific">Streptomyces venezuelae</name>
    <dbReference type="NCBI Taxonomy" id="54571"/>
    <lineage>
        <taxon>Bacteria</taxon>
        <taxon>Bacillati</taxon>
        <taxon>Actinomycetota</taxon>
        <taxon>Actinomycetes</taxon>
        <taxon>Kitasatosporales</taxon>
        <taxon>Streptomycetaceae</taxon>
        <taxon>Streptomyces</taxon>
    </lineage>
</organism>
<dbReference type="EC" id="3.1.2.-" evidence="7"/>
<dbReference type="EMBL" id="AF079138">
    <property type="protein sequence ID" value="AAC69333.1"/>
    <property type="molecule type" value="Genomic_DNA"/>
</dbReference>
<dbReference type="EMBL" id="LN881739">
    <property type="protein sequence ID" value="CUM38838.1"/>
    <property type="molecule type" value="Genomic_DNA"/>
</dbReference>
<dbReference type="PIR" id="T17413">
    <property type="entry name" value="T17413"/>
</dbReference>
<dbReference type="SMR" id="Q9ZGI1"/>
<dbReference type="ESTHER" id="strve-PIKAV">
    <property type="family name" value="Thioesterase"/>
</dbReference>
<dbReference type="PATRIC" id="fig|54571.11.peg.3233"/>
<dbReference type="BioCyc" id="MetaCyc:MONOMER-18410"/>
<dbReference type="BRENDA" id="2.3.1.239">
    <property type="organism ID" value="6106"/>
</dbReference>
<dbReference type="BRENDA" id="2.3.1.240">
    <property type="organism ID" value="6106"/>
</dbReference>
<dbReference type="BRENDA" id="3.1.2.2">
    <property type="organism ID" value="6106"/>
</dbReference>
<dbReference type="BRENDA" id="3.1.2.20">
    <property type="organism ID" value="6106"/>
</dbReference>
<dbReference type="GO" id="GO:0016787">
    <property type="term" value="F:hydrolase activity"/>
    <property type="evidence" value="ECO:0007669"/>
    <property type="project" value="UniProtKB-KW"/>
</dbReference>
<dbReference type="GO" id="GO:0008610">
    <property type="term" value="P:lipid biosynthetic process"/>
    <property type="evidence" value="ECO:0007669"/>
    <property type="project" value="TreeGrafter"/>
</dbReference>
<dbReference type="GO" id="GO:0033068">
    <property type="term" value="P:macrolide biosynthetic process"/>
    <property type="evidence" value="ECO:0000314"/>
    <property type="project" value="UniProtKB"/>
</dbReference>
<dbReference type="Gene3D" id="3.40.50.1820">
    <property type="entry name" value="alpha/beta hydrolase"/>
    <property type="match status" value="1"/>
</dbReference>
<dbReference type="InterPro" id="IPR029058">
    <property type="entry name" value="AB_hydrolase_fold"/>
</dbReference>
<dbReference type="InterPro" id="IPR020802">
    <property type="entry name" value="PKS_thioesterase"/>
</dbReference>
<dbReference type="InterPro" id="IPR012223">
    <property type="entry name" value="TEII"/>
</dbReference>
<dbReference type="InterPro" id="IPR001031">
    <property type="entry name" value="Thioesterase"/>
</dbReference>
<dbReference type="PANTHER" id="PTHR11487:SF0">
    <property type="entry name" value="S-ACYL FATTY ACID SYNTHASE THIOESTERASE, MEDIUM CHAIN"/>
    <property type="match status" value="1"/>
</dbReference>
<dbReference type="PANTHER" id="PTHR11487">
    <property type="entry name" value="THIOESTERASE"/>
    <property type="match status" value="1"/>
</dbReference>
<dbReference type="Pfam" id="PF00975">
    <property type="entry name" value="Thioesterase"/>
    <property type="match status" value="1"/>
</dbReference>
<dbReference type="SMART" id="SM00824">
    <property type="entry name" value="PKS_TE"/>
    <property type="match status" value="1"/>
</dbReference>
<dbReference type="SUPFAM" id="SSF53474">
    <property type="entry name" value="alpha/beta-Hydrolases"/>
    <property type="match status" value="1"/>
</dbReference>
<feature type="chain" id="PRO_0000436361" description="Thioesterase PikA5">
    <location>
        <begin position="1"/>
        <end position="281"/>
    </location>
</feature>
<feature type="region of interest" description="Thioesterase" evidence="6">
    <location>
        <begin position="26"/>
        <end position="249"/>
    </location>
</feature>
<feature type="active site" description="Nucleophile; for thioesterase activity" evidence="6">
    <location>
        <position position="99"/>
    </location>
</feature>
<feature type="active site" description="Proton acceptor; for thioesterase activity" evidence="6">
    <location>
        <position position="233"/>
    </location>
</feature>
<evidence type="ECO:0000269" key="1">
    <source>
    </source>
</evidence>
<evidence type="ECO:0000269" key="2">
    <source>
    </source>
</evidence>
<evidence type="ECO:0000269" key="3">
    <source>
    </source>
</evidence>
<evidence type="ECO:0000303" key="4">
    <source>
    </source>
</evidence>
<evidence type="ECO:0000303" key="5">
    <source>
    </source>
</evidence>
<evidence type="ECO:0000305" key="6"/>
<evidence type="ECO:0000305" key="7">
    <source>
    </source>
</evidence>
<evidence type="ECO:0000312" key="8">
    <source>
        <dbReference type="EMBL" id="CUM38838.1"/>
    </source>
</evidence>
<name>PIKA5_STRVZ</name>
<gene>
    <name evidence="5" type="primary">pikAV</name>
    <name evidence="8" type="ORF">BN2537_6641</name>
</gene>
<protein>
    <recommendedName>
        <fullName evidence="4">Thioesterase PikA5</fullName>
        <ecNumber evidence="7">3.1.2.-</ecNumber>
    </recommendedName>
    <alternativeName>
        <fullName evidence="4">Editing thioesterase</fullName>
    </alternativeName>
    <alternativeName>
        <fullName evidence="4">Thioesterase II</fullName>
        <shortName evidence="4">TEII</shortName>
    </alternativeName>
    <alternativeName>
        <fullName evidence="4">Type II thioesterase</fullName>
    </alternativeName>
</protein>
<reference key="1">
    <citation type="journal article" date="1998" name="Proc. Natl. Acad. Sci. U.S.A.">
        <title>A gene cluster for macrolide antibiotic biosynthesis in Streptomyces venezuelae: architecture of metabolic diversity.</title>
        <authorList>
            <person name="Xue Y."/>
            <person name="Zhao L."/>
            <person name="Liu H.W."/>
            <person name="Sherman D.H."/>
        </authorList>
    </citation>
    <scope>NUCLEOTIDE SEQUENCE [GENOMIC DNA]</scope>
    <scope>FUNCTION</scope>
    <scope>PATHWAY</scope>
    <scope>DISRUPTION PHENOTYPE</scope>
    <source>
        <strain>ATCC 15439 / DSM 41110 / IMRU3627 / M-2140</strain>
    </source>
</reference>
<reference key="2">
    <citation type="submission" date="2015-08" db="EMBL/GenBank/DDBJ databases">
        <authorList>
            <person name="Babu N.S."/>
            <person name="Beckwith C.J."/>
            <person name="Beseler K.G."/>
            <person name="Brison A."/>
            <person name="Carone J.V."/>
            <person name="Caskin T.P."/>
            <person name="Diamond M."/>
            <person name="Durham M.E."/>
            <person name="Foxe J.M."/>
            <person name="Go M."/>
            <person name="Henderson B.A."/>
            <person name="Jones I.B."/>
            <person name="McGettigan J.A."/>
            <person name="Micheletti S.J."/>
            <person name="Nasrallah M.E."/>
            <person name="Ortiz D."/>
            <person name="Piller C.R."/>
            <person name="Privatt S.R."/>
            <person name="Schneider S.L."/>
            <person name="Sharp S."/>
            <person name="Smith T.C."/>
            <person name="Stanton J.D."/>
            <person name="Ullery H.E."/>
            <person name="Wilson R.J."/>
            <person name="Serrano M.G."/>
            <person name="Buck G."/>
            <person name="Lee V."/>
            <person name="Wang Y."/>
            <person name="Carvalho R."/>
            <person name="Voegtly L."/>
            <person name="Shi R."/>
            <person name="Duckworth R."/>
            <person name="Johnson A."/>
            <person name="Loviza R."/>
            <person name="Walstead R."/>
            <person name="Shah Z."/>
            <person name="Kiflezghi M."/>
            <person name="Wade K."/>
            <person name="Ball S.L."/>
            <person name="Bradley K.W."/>
            <person name="Asai D.J."/>
            <person name="Bowman C.A."/>
            <person name="Russell D.A."/>
            <person name="Pope W.H."/>
            <person name="Jacobs-Sera D."/>
            <person name="Hendrix R.W."/>
            <person name="Hatfull G.F."/>
        </authorList>
    </citation>
    <scope>NUCLEOTIDE SEQUENCE [GENOMIC DNA]</scope>
    <source>
        <strain>ATCC 15439 / DSM 41110 / IMRU3627 / M-2140</strain>
    </source>
</reference>
<reference key="3">
    <citation type="journal article" date="1999" name="Chem. Biol.">
        <title>Elucidating the mechanism of chain termination switching in the picromycin/methymycin polyketide synthase.</title>
        <authorList>
            <person name="Tang L."/>
            <person name="Fu H."/>
            <person name="Betlach M.C."/>
            <person name="McDaniel R."/>
        </authorList>
    </citation>
    <scope>FUNCTION</scope>
</reference>
<reference key="4">
    <citation type="journal article" date="2002" name="J. Biol. Chem.">
        <title>Biochemical evidence for an editing role of thioesterase II in the biosynthesis of the polyketide pikromycin.</title>
        <authorList>
            <person name="Kim B.S."/>
            <person name="Cropp T.A."/>
            <person name="Beck B.J."/>
            <person name="Sherman D.H."/>
            <person name="Reynolds K.A."/>
        </authorList>
    </citation>
    <scope>FUNCTION</scope>
    <scope>CATALYTIC ACTIVITY</scope>
    <scope>SUBSTRATE SPECIFICITY</scope>
</reference>
<comment type="function">
    <text evidence="1 2 3">Involved in the biosynthesis of 12- and 14-membered ring macrolactone antibiotics such as methymycin, neomethymycin, narbomycin and pikromycin (PubMed:10421766, PubMed:9770448). Responsible for removing mis-formed acyl moieties (aberrant decarboxylation) that are bound to the PKS and could block it (PubMed:10421766, PubMed:12368286). Catalyzes the cleavage of methylmalonyl-[acp] (PubMed:12368286). It exhibits some acyl-group specificity, and catalyzes the cleavage of propionyl and butyryl derivatives faster than acetyl malonyl or methylmalonyl derivatives (PubMed:12368286).</text>
</comment>
<comment type="pathway">
    <text evidence="3">Antibiotic biosynthesis.</text>
</comment>
<comment type="disruption phenotype">
    <text evidence="3">Cells lacking this gene produce less than 5% of methymycin, neomethymycin and pikromycin.</text>
</comment>
<comment type="similarity">
    <text evidence="6">Belongs to the thioesterase family.</text>
</comment>